<accession>Q54M25</accession>
<sequence>MLFIKSLLLLLSLIFAVSNATGYVGFKVDGPGCNATKIITLENGACQTVCTNLYGKVTPTNDPSKFNLNPFIDVDCKTPLMAEQQVTCLPDNKPFKVSTLTVTCIPDTTSSSTSPSSTSPSSTSPASTLIGSIAFVTLAALFALI</sequence>
<dbReference type="EMBL" id="AAFI02000085">
    <property type="protein sequence ID" value="EAL64299.1"/>
    <property type="molecule type" value="Genomic_DNA"/>
</dbReference>
<dbReference type="RefSeq" id="XP_637806.1">
    <property type="nucleotide sequence ID" value="XM_632714.1"/>
</dbReference>
<dbReference type="FunCoup" id="Q54M25">
    <property type="interactions" value="40"/>
</dbReference>
<dbReference type="GlyCosmos" id="Q54M25">
    <property type="glycosylation" value="1 site, No reported glycans"/>
</dbReference>
<dbReference type="GlyGen" id="Q54M25">
    <property type="glycosylation" value="1 site"/>
</dbReference>
<dbReference type="PaxDb" id="44689-DDB0232285"/>
<dbReference type="EnsemblProtists" id="EAL64299">
    <property type="protein sequence ID" value="EAL64299"/>
    <property type="gene ID" value="DDB_G0286247"/>
</dbReference>
<dbReference type="GeneID" id="8625520"/>
<dbReference type="KEGG" id="ddi:DDB_G0286247"/>
<dbReference type="dictyBase" id="DDB_G0286247">
    <property type="gene designation" value="ponB"/>
</dbReference>
<dbReference type="VEuPathDB" id="AmoebaDB:DDB_G0286247"/>
<dbReference type="HOGENOM" id="CLU_1790515_0_0_1"/>
<dbReference type="InParanoid" id="Q54M25"/>
<dbReference type="PRO" id="PR:Q54M25"/>
<dbReference type="Proteomes" id="UP000002195">
    <property type="component" value="Chromosome 4"/>
</dbReference>
<dbReference type="GO" id="GO:0031410">
    <property type="term" value="C:cytoplasmic vesicle"/>
    <property type="evidence" value="ECO:0000314"/>
    <property type="project" value="dictyBase"/>
</dbReference>
<dbReference type="GO" id="GO:0016020">
    <property type="term" value="C:membrane"/>
    <property type="evidence" value="ECO:0000250"/>
    <property type="project" value="dictyBase"/>
</dbReference>
<dbReference type="GO" id="GO:0005886">
    <property type="term" value="C:plasma membrane"/>
    <property type="evidence" value="ECO:0000314"/>
    <property type="project" value="dictyBase"/>
</dbReference>
<dbReference type="GO" id="GO:0098552">
    <property type="term" value="C:side of membrane"/>
    <property type="evidence" value="ECO:0007669"/>
    <property type="project" value="UniProtKB-KW"/>
</dbReference>
<dbReference type="GO" id="GO:0051015">
    <property type="term" value="F:actin filament binding"/>
    <property type="evidence" value="ECO:0000250"/>
    <property type="project" value="dictyBase"/>
</dbReference>
<name>PONB_DICDI</name>
<feature type="signal peptide" evidence="1">
    <location>
        <begin position="1"/>
        <end position="22"/>
    </location>
</feature>
<feature type="chain" id="PRO_0000312132" description="Ponticulin-like protein B">
    <location>
        <begin position="23"/>
        <end position="117"/>
    </location>
</feature>
<feature type="propeptide" id="PRO_0000312133" description="Removed in mature form" evidence="1">
    <location>
        <begin position="118"/>
        <end position="145"/>
    </location>
</feature>
<feature type="region of interest" description="Disordered" evidence="2">
    <location>
        <begin position="107"/>
        <end position="126"/>
    </location>
</feature>
<feature type="compositionally biased region" description="Low complexity" evidence="2">
    <location>
        <begin position="108"/>
        <end position="126"/>
    </location>
</feature>
<feature type="lipid moiety-binding region" description="GPI-like-anchor amidated serine" evidence="1">
    <location>
        <position position="117"/>
    </location>
</feature>
<feature type="glycosylation site" description="N-linked (GlcNAc...) asparagine" evidence="1">
    <location>
        <position position="34"/>
    </location>
</feature>
<protein>
    <recommendedName>
        <fullName>Ponticulin-like protein B</fullName>
    </recommendedName>
</protein>
<organism>
    <name type="scientific">Dictyostelium discoideum</name>
    <name type="common">Social amoeba</name>
    <dbReference type="NCBI Taxonomy" id="44689"/>
    <lineage>
        <taxon>Eukaryota</taxon>
        <taxon>Amoebozoa</taxon>
        <taxon>Evosea</taxon>
        <taxon>Eumycetozoa</taxon>
        <taxon>Dictyostelia</taxon>
        <taxon>Dictyosteliales</taxon>
        <taxon>Dictyosteliaceae</taxon>
        <taxon>Dictyostelium</taxon>
    </lineage>
</organism>
<gene>
    <name type="primary">ponB</name>
    <name type="ORF">DDB_G0286247</name>
</gene>
<evidence type="ECO:0000255" key="1"/>
<evidence type="ECO:0000256" key="2">
    <source>
        <dbReference type="SAM" id="MobiDB-lite"/>
    </source>
</evidence>
<evidence type="ECO:0000269" key="3">
    <source>
    </source>
</evidence>
<evidence type="ECO:0000269" key="4">
    <source>
    </source>
</evidence>
<evidence type="ECO:0000305" key="5"/>
<reference key="1">
    <citation type="journal article" date="2005" name="Nature">
        <title>The genome of the social amoeba Dictyostelium discoideum.</title>
        <authorList>
            <person name="Eichinger L."/>
            <person name="Pachebat J.A."/>
            <person name="Gloeckner G."/>
            <person name="Rajandream M.A."/>
            <person name="Sucgang R."/>
            <person name="Berriman M."/>
            <person name="Song J."/>
            <person name="Olsen R."/>
            <person name="Szafranski K."/>
            <person name="Xu Q."/>
            <person name="Tunggal B."/>
            <person name="Kummerfeld S."/>
            <person name="Madera M."/>
            <person name="Konfortov B.A."/>
            <person name="Rivero F."/>
            <person name="Bankier A.T."/>
            <person name="Lehmann R."/>
            <person name="Hamlin N."/>
            <person name="Davies R."/>
            <person name="Gaudet P."/>
            <person name="Fey P."/>
            <person name="Pilcher K."/>
            <person name="Chen G."/>
            <person name="Saunders D."/>
            <person name="Sodergren E.J."/>
            <person name="Davis P."/>
            <person name="Kerhornou A."/>
            <person name="Nie X."/>
            <person name="Hall N."/>
            <person name="Anjard C."/>
            <person name="Hemphill L."/>
            <person name="Bason N."/>
            <person name="Farbrother P."/>
            <person name="Desany B."/>
            <person name="Just E."/>
            <person name="Morio T."/>
            <person name="Rost R."/>
            <person name="Churcher C.M."/>
            <person name="Cooper J."/>
            <person name="Haydock S."/>
            <person name="van Driessche N."/>
            <person name="Cronin A."/>
            <person name="Goodhead I."/>
            <person name="Muzny D.M."/>
            <person name="Mourier T."/>
            <person name="Pain A."/>
            <person name="Lu M."/>
            <person name="Harper D."/>
            <person name="Lindsay R."/>
            <person name="Hauser H."/>
            <person name="James K.D."/>
            <person name="Quiles M."/>
            <person name="Madan Babu M."/>
            <person name="Saito T."/>
            <person name="Buchrieser C."/>
            <person name="Wardroper A."/>
            <person name="Felder M."/>
            <person name="Thangavelu M."/>
            <person name="Johnson D."/>
            <person name="Knights A."/>
            <person name="Loulseged H."/>
            <person name="Mungall K.L."/>
            <person name="Oliver K."/>
            <person name="Price C."/>
            <person name="Quail M.A."/>
            <person name="Urushihara H."/>
            <person name="Hernandez J."/>
            <person name="Rabbinowitsch E."/>
            <person name="Steffen D."/>
            <person name="Sanders M."/>
            <person name="Ma J."/>
            <person name="Kohara Y."/>
            <person name="Sharp S."/>
            <person name="Simmonds M.N."/>
            <person name="Spiegler S."/>
            <person name="Tivey A."/>
            <person name="Sugano S."/>
            <person name="White B."/>
            <person name="Walker D."/>
            <person name="Woodward J.R."/>
            <person name="Winckler T."/>
            <person name="Tanaka Y."/>
            <person name="Shaulsky G."/>
            <person name="Schleicher M."/>
            <person name="Weinstock G.M."/>
            <person name="Rosenthal A."/>
            <person name="Cox E.C."/>
            <person name="Chisholm R.L."/>
            <person name="Gibbs R.A."/>
            <person name="Loomis W.F."/>
            <person name="Platzer M."/>
            <person name="Kay R.R."/>
            <person name="Williams J.G."/>
            <person name="Dear P.H."/>
            <person name="Noegel A.A."/>
            <person name="Barrell B.G."/>
            <person name="Kuspa A."/>
        </authorList>
    </citation>
    <scope>NUCLEOTIDE SEQUENCE [LARGE SCALE GENOMIC DNA]</scope>
    <source>
        <strain>AX4</strain>
    </source>
</reference>
<reference key="2">
    <citation type="journal article" date="2003" name="Biochim. Biophys. Acta">
        <title>Identification of a second member of the ponticulin gene family and its differential expression pattern.</title>
        <authorList>
            <person name="Hitt A.L."/>
            <person name="Iijima-Shimizu M."/>
            <person name="DuBay M.J."/>
            <person name="Antonette L.L."/>
            <person name="Urushihara H."/>
            <person name="Wilkerson C.G."/>
        </authorList>
    </citation>
    <scope>DEVELOPMENTAL STAGE</scope>
    <scope>INDUCTION</scope>
</reference>
<reference key="3">
    <citation type="journal article" date="2008" name="Langmuir">
        <title>Minimal F-actin cytoskeletal system for planar supported phospholipid bilayers.</title>
        <authorList>
            <person name="Barfoot R.J."/>
            <person name="Sheikh K.H."/>
            <person name="Johnson B.R."/>
            <person name="Colyer J."/>
            <person name="Miles R.E."/>
            <person name="Jeuken L.J."/>
            <person name="Bushby R.J."/>
            <person name="Evans S.D."/>
        </authorList>
    </citation>
    <scope>FUNCTION</scope>
</reference>
<comment type="function">
    <text evidence="4">Binds F-actin and nucleates actin assembly.</text>
</comment>
<comment type="subcellular location">
    <subcellularLocation>
        <location evidence="5">Cell membrane</location>
        <topology evidence="5">Lipid-anchor</topology>
        <topology evidence="5">GPI-anchor</topology>
    </subcellularLocation>
</comment>
<comment type="developmental stage">
    <text evidence="3">Expressed by cells, when grown on bacterial lawns, or by cells cultured under conditions that give rise to fusion-competent gametes, i.e. in a suspension of bacteria in the dark for 15 hour at 21 degrees Celsius. Does not appear to be expressed by axenically grown vegetative cells or by cells during the asexual, developmental life-cycle induced by removing axenic cells from HL-5 media. In contrast, ponticulin is expressed by vegetative cells and during the early stages of the asexual developmental cycle.</text>
</comment>
<comment type="induction">
    <text evidence="3">Up-regulated in cells that are either actively phagocytosing bacteria or in cells that have been cultured under conditions that promote the generation of cells that are competent to fuse with the opposite mating type during sexual reproduction.</text>
</comment>
<comment type="PTM">
    <text evidence="5">The GPI-like-anchor contains a phosphoceramide group, rather than a phosphatidyl group.</text>
</comment>
<comment type="similarity">
    <text evidence="5">Belongs to the ponticulin family.</text>
</comment>
<comment type="caution">
    <text evidence="5">The Dictyosteliida are known to produce a glycosylsphingolipidinositol anchor (GPI-like-anchor). It has not been established whether Dictyosteliida make a glycosylphosphatidylinositol anchor (GPI-anchor) also, and whether their GPI-like-anchor modifications can be interconverted with GPI-anchor modifications in a resculpting process. It has not been established that the GPI-like-anchor modification in Dictyosteliida utilizes the same sequence motif.</text>
</comment>
<proteinExistence type="evidence at transcript level"/>
<keyword id="KW-1003">Cell membrane</keyword>
<keyword id="KW-0325">Glycoprotein</keyword>
<keyword id="KW-0336">GPI-anchor</keyword>
<keyword id="KW-0449">Lipoprotein</keyword>
<keyword id="KW-0472">Membrane</keyword>
<keyword id="KW-1185">Reference proteome</keyword>
<keyword id="KW-0732">Signal</keyword>